<protein>
    <recommendedName>
        <fullName>Uncharacterized protein Mb2609c</fullName>
    </recommendedName>
</protein>
<feature type="chain" id="PRO_0000104062" description="Uncharacterized protein Mb2609c">
    <location>
        <begin position="1"/>
        <end position="340"/>
    </location>
</feature>
<feature type="transmembrane region" description="Helical" evidence="1">
    <location>
        <begin position="140"/>
        <end position="160"/>
    </location>
</feature>
<feature type="transmembrane region" description="Helical" evidence="1">
    <location>
        <begin position="243"/>
        <end position="263"/>
    </location>
</feature>
<feature type="domain" description="Radical SAM core" evidence="2">
    <location>
        <begin position="58"/>
        <end position="307"/>
    </location>
</feature>
<feature type="binding site" evidence="1">
    <location>
        <position position="72"/>
    </location>
    <ligand>
        <name>[4Fe-4S] cluster</name>
        <dbReference type="ChEBI" id="CHEBI:49883"/>
        <note>4Fe-4S-S-AdoMet</note>
    </ligand>
</feature>
<feature type="binding site" evidence="1">
    <location>
        <position position="76"/>
    </location>
    <ligand>
        <name>[4Fe-4S] cluster</name>
        <dbReference type="ChEBI" id="CHEBI:49883"/>
        <note>4Fe-4S-S-AdoMet</note>
    </ligand>
</feature>
<feature type="binding site" evidence="1">
    <location>
        <position position="79"/>
    </location>
    <ligand>
        <name>[4Fe-4S] cluster</name>
        <dbReference type="ChEBI" id="CHEBI:49883"/>
        <note>4Fe-4S-S-AdoMet</note>
    </ligand>
</feature>
<proteinExistence type="predicted"/>
<dbReference type="EMBL" id="LT708304">
    <property type="protein sequence ID" value="SIU01227.1"/>
    <property type="molecule type" value="Genomic_DNA"/>
</dbReference>
<dbReference type="RefSeq" id="NP_856255.1">
    <property type="nucleotide sequence ID" value="NC_002945.3"/>
</dbReference>
<dbReference type="RefSeq" id="WP_003413359.1">
    <property type="nucleotide sequence ID" value="NC_002945.4"/>
</dbReference>
<dbReference type="KEGG" id="mbo:BQ2027_MB2609C"/>
<dbReference type="PATRIC" id="fig|233413.5.peg.2870"/>
<dbReference type="Proteomes" id="UP000001419">
    <property type="component" value="Chromosome"/>
</dbReference>
<dbReference type="GO" id="GO:0005886">
    <property type="term" value="C:plasma membrane"/>
    <property type="evidence" value="ECO:0007669"/>
    <property type="project" value="UniProtKB-SubCell"/>
</dbReference>
<dbReference type="GO" id="GO:0051539">
    <property type="term" value="F:4 iron, 4 sulfur cluster binding"/>
    <property type="evidence" value="ECO:0007669"/>
    <property type="project" value="UniProtKB-KW"/>
</dbReference>
<dbReference type="GO" id="GO:0003824">
    <property type="term" value="F:catalytic activity"/>
    <property type="evidence" value="ECO:0007669"/>
    <property type="project" value="InterPro"/>
</dbReference>
<dbReference type="GO" id="GO:0046872">
    <property type="term" value="F:metal ion binding"/>
    <property type="evidence" value="ECO:0007669"/>
    <property type="project" value="UniProtKB-KW"/>
</dbReference>
<dbReference type="CDD" id="cd01335">
    <property type="entry name" value="Radical_SAM"/>
    <property type="match status" value="1"/>
</dbReference>
<dbReference type="Gene3D" id="3.80.30.30">
    <property type="match status" value="1"/>
</dbReference>
<dbReference type="InterPro" id="IPR006638">
    <property type="entry name" value="Elp3/MiaA/NifB-like_rSAM"/>
</dbReference>
<dbReference type="InterPro" id="IPR040086">
    <property type="entry name" value="MJ0683-like"/>
</dbReference>
<dbReference type="InterPro" id="IPR007197">
    <property type="entry name" value="rSAM"/>
</dbReference>
<dbReference type="NCBIfam" id="NF038135">
    <property type="entry name" value="rSAM_Rv2578c"/>
    <property type="match status" value="1"/>
</dbReference>
<dbReference type="PANTHER" id="PTHR43432">
    <property type="entry name" value="SLR0285 PROTEIN"/>
    <property type="match status" value="1"/>
</dbReference>
<dbReference type="PANTHER" id="PTHR43432:SF3">
    <property type="entry name" value="SLR0285 PROTEIN"/>
    <property type="match status" value="1"/>
</dbReference>
<dbReference type="Pfam" id="PF04055">
    <property type="entry name" value="Radical_SAM"/>
    <property type="match status" value="1"/>
</dbReference>
<dbReference type="SFLD" id="SFLDS00029">
    <property type="entry name" value="Radical_SAM"/>
    <property type="match status" value="1"/>
</dbReference>
<dbReference type="SFLD" id="SFLDG01084">
    <property type="entry name" value="Uncharacterised_Radical_SAM_Su"/>
    <property type="match status" value="1"/>
</dbReference>
<dbReference type="SMART" id="SM00729">
    <property type="entry name" value="Elp3"/>
    <property type="match status" value="1"/>
</dbReference>
<dbReference type="SUPFAM" id="SSF102114">
    <property type="entry name" value="Radical SAM enzymes"/>
    <property type="match status" value="1"/>
</dbReference>
<dbReference type="PROSITE" id="PS51918">
    <property type="entry name" value="RADICAL_SAM"/>
    <property type="match status" value="1"/>
</dbReference>
<gene>
    <name type="ordered locus">BQ2027_MB2609C</name>
</gene>
<accession>P65024</accession>
<accession>A0A1R3Y1V2</accession>
<accession>Q50643</accession>
<accession>X2BLC7</accession>
<organism>
    <name type="scientific">Mycobacterium bovis (strain ATCC BAA-935 / AF2122/97)</name>
    <dbReference type="NCBI Taxonomy" id="233413"/>
    <lineage>
        <taxon>Bacteria</taxon>
        <taxon>Bacillati</taxon>
        <taxon>Actinomycetota</taxon>
        <taxon>Actinomycetes</taxon>
        <taxon>Mycobacteriales</taxon>
        <taxon>Mycobacteriaceae</taxon>
        <taxon>Mycobacterium</taxon>
        <taxon>Mycobacterium tuberculosis complex</taxon>
    </lineage>
</organism>
<name>Y2609_MYCBO</name>
<keyword id="KW-0004">4Fe-4S</keyword>
<keyword id="KW-1003">Cell membrane</keyword>
<keyword id="KW-0408">Iron</keyword>
<keyword id="KW-0411">Iron-sulfur</keyword>
<keyword id="KW-0472">Membrane</keyword>
<keyword id="KW-0479">Metal-binding</keyword>
<keyword id="KW-1185">Reference proteome</keyword>
<keyword id="KW-0949">S-adenosyl-L-methionine</keyword>
<keyword id="KW-0812">Transmembrane</keyword>
<keyword id="KW-1133">Transmembrane helix</keyword>
<sequence length="340" mass="37176">MRWARQAVAVNGMPVDDGALPGLQRIGLVRSVRAPQFDGITFHEVLCKSALNKVPNAAALPFRYTVNGYRGCSHACRYCFARPTHEYLDFNPGTDFDTQVVVKTNVAAVLRHELRRPSWRRETVALGTNTDPYQRAEGRYALMPGIIGALAASGTPLSILTKGTLLRRDLPLIAEAAQQVPVSVAVSLAVGDPELHRDVESGTPTPQARLALITAIRAAGLDCHVMVAPVLPQLTDSGEHLDQLLGQIAAAGATGVTVFGLHLRGSTRGWFMCWLARAHPELVSRYRELYRRGPYLPPSYREMLRERVAPLIAKYRLAGDHRPAPPETEAALVPVQATLF</sequence>
<reference key="1">
    <citation type="journal article" date="2003" name="Proc. Natl. Acad. Sci. U.S.A.">
        <title>The complete genome sequence of Mycobacterium bovis.</title>
        <authorList>
            <person name="Garnier T."/>
            <person name="Eiglmeier K."/>
            <person name="Camus J.-C."/>
            <person name="Medina N."/>
            <person name="Mansoor H."/>
            <person name="Pryor M."/>
            <person name="Duthoy S."/>
            <person name="Grondin S."/>
            <person name="Lacroix C."/>
            <person name="Monsempe C."/>
            <person name="Simon S."/>
            <person name="Harris B."/>
            <person name="Atkin R."/>
            <person name="Doggett J."/>
            <person name="Mayes R."/>
            <person name="Keating L."/>
            <person name="Wheeler P.R."/>
            <person name="Parkhill J."/>
            <person name="Barrell B.G."/>
            <person name="Cole S.T."/>
            <person name="Gordon S.V."/>
            <person name="Hewinson R.G."/>
        </authorList>
    </citation>
    <scope>NUCLEOTIDE SEQUENCE [LARGE SCALE GENOMIC DNA]</scope>
    <source>
        <strain>ATCC BAA-935 / AF2122/97</strain>
    </source>
</reference>
<reference key="2">
    <citation type="journal article" date="2017" name="Genome Announc.">
        <title>Updated reference genome sequence and annotation of Mycobacterium bovis AF2122/97.</title>
        <authorList>
            <person name="Malone K.M."/>
            <person name="Farrell D."/>
            <person name="Stuber T.P."/>
            <person name="Schubert O.T."/>
            <person name="Aebersold R."/>
            <person name="Robbe-Austerman S."/>
            <person name="Gordon S.V."/>
        </authorList>
    </citation>
    <scope>NUCLEOTIDE SEQUENCE [LARGE SCALE GENOMIC DNA]</scope>
    <scope>GENOME REANNOTATION</scope>
    <source>
        <strain>ATCC BAA-935 / AF2122/97</strain>
    </source>
</reference>
<comment type="cofactor">
    <cofactor evidence="3">
        <name>[4Fe-4S] cluster</name>
        <dbReference type="ChEBI" id="CHEBI:49883"/>
    </cofactor>
    <text evidence="3">Binds 1 [4Fe-4S] cluster. The cluster is coordinated with 3 cysteines and an exchangeable S-adenosyl-L-methionine.</text>
</comment>
<comment type="subcellular location">
    <subcellularLocation>
        <location evidence="3">Cell membrane</location>
        <topology evidence="3">Multi-pass membrane protein</topology>
    </subcellularLocation>
</comment>
<evidence type="ECO:0000255" key="1"/>
<evidence type="ECO:0000255" key="2">
    <source>
        <dbReference type="PROSITE-ProRule" id="PRU01266"/>
    </source>
</evidence>
<evidence type="ECO:0000305" key="3"/>